<comment type="function">
    <text evidence="1">Implicated in a number of cellular processes, including proliferation, differentiation, caspase-dependent and caspase-independent apoptosis, suppression of transformation (tumor suppressor), inhibition of protein phosphatase 2A, regulation of mRNA trafficking and stability, and inhibition of acetyltransferases as part of the INHAT (inhibitor of histone acetyltransferases) complex.</text>
</comment>
<comment type="subcellular location">
    <subcellularLocation>
        <location>Nucleus</location>
    </subcellularLocation>
    <subcellularLocation>
        <location>Cytoplasm</location>
    </subcellularLocation>
    <text evidence="1">Shuttles between nucleus and cytoplasm.</text>
</comment>
<comment type="alternative products">
    <event type="alternative splicing"/>
    <isoform>
        <id>Q9V895-1</id>
        <name>A</name>
        <sequence type="displayed"/>
    </isoform>
    <isoform>
        <id>Q9V895-2</id>
        <name>C</name>
        <sequence type="described" ref="VSP_036063"/>
    </isoform>
</comment>
<comment type="PTM">
    <text evidence="1">Phosphorylated on serine residues.</text>
</comment>
<comment type="similarity">
    <text evidence="4">Belongs to the ANP32 family.</text>
</comment>
<dbReference type="EMBL" id="AE013599">
    <property type="protein sequence ID" value="AAF57776.1"/>
    <property type="molecule type" value="Genomic_DNA"/>
</dbReference>
<dbReference type="EMBL" id="AE013599">
    <property type="protein sequence ID" value="ABV53838.1"/>
    <property type="molecule type" value="Genomic_DNA"/>
</dbReference>
<dbReference type="EMBL" id="AY118324">
    <property type="protein sequence ID" value="AAM48353.1"/>
    <property type="molecule type" value="mRNA"/>
</dbReference>
<dbReference type="EMBL" id="BT012474">
    <property type="protein sequence ID" value="AAS93745.1"/>
    <property type="molecule type" value="mRNA"/>
</dbReference>
<dbReference type="EMBL" id="BT030189">
    <property type="protein sequence ID" value="ABN49328.1"/>
    <property type="molecule type" value="mRNA"/>
</dbReference>
<dbReference type="RefSeq" id="NP_001097361.1">
    <molecule id="Q9V895-2"/>
    <property type="nucleotide sequence ID" value="NM_001103891.3"/>
</dbReference>
<dbReference type="RefSeq" id="NP_001163184.1">
    <molecule id="Q9V895-2"/>
    <property type="nucleotide sequence ID" value="NM_001169713.2"/>
</dbReference>
<dbReference type="RefSeq" id="NP_523780.1">
    <molecule id="Q9V895-1"/>
    <property type="nucleotide sequence ID" value="NM_079056.4"/>
</dbReference>
<dbReference type="RefSeq" id="NP_725732.1">
    <molecule id="Q9V895-1"/>
    <property type="nucleotide sequence ID" value="NM_166258.3"/>
</dbReference>
<dbReference type="SMR" id="Q9V895"/>
<dbReference type="BioGRID" id="62728">
    <property type="interactions" value="13"/>
</dbReference>
<dbReference type="FunCoup" id="Q9V895">
    <property type="interactions" value="2123"/>
</dbReference>
<dbReference type="IntAct" id="Q9V895">
    <property type="interactions" value="130"/>
</dbReference>
<dbReference type="DNASU" id="37043"/>
<dbReference type="EnsemblMetazoa" id="FBtr0086822">
    <molecule id="Q9V895-1"/>
    <property type="protein sequence ID" value="FBpp0086001"/>
    <property type="gene ID" value="FBgn0034282"/>
</dbReference>
<dbReference type="EnsemblMetazoa" id="FBtr0086823">
    <molecule id="Q9V895-1"/>
    <property type="protein sequence ID" value="FBpp0086002"/>
    <property type="gene ID" value="FBgn0034282"/>
</dbReference>
<dbReference type="EnsemblMetazoa" id="FBtr0113091">
    <molecule id="Q9V895-2"/>
    <property type="protein sequence ID" value="FBpp0112004"/>
    <property type="gene ID" value="FBgn0034282"/>
</dbReference>
<dbReference type="EnsemblMetazoa" id="FBtr0300410">
    <molecule id="Q9V895-2"/>
    <property type="protein sequence ID" value="FBpp0289639"/>
    <property type="gene ID" value="FBgn0034282"/>
</dbReference>
<dbReference type="GeneID" id="37043"/>
<dbReference type="KEGG" id="dme:Dmel_CG5784"/>
<dbReference type="UCSC" id="CG5784-RA">
    <molecule id="Q9V895-1"/>
    <property type="organism name" value="d. melanogaster"/>
</dbReference>
<dbReference type="UCSC" id="CG5784-RC">
    <property type="organism name" value="d. melanogaster"/>
</dbReference>
<dbReference type="AGR" id="FB:FBgn0034282"/>
<dbReference type="CTD" id="37043"/>
<dbReference type="FlyBase" id="FBgn0034282">
    <property type="gene designation" value="Mapmodulin"/>
</dbReference>
<dbReference type="VEuPathDB" id="VectorBase:FBgn0034282"/>
<dbReference type="eggNOG" id="KOG2739">
    <property type="taxonomic scope" value="Eukaryota"/>
</dbReference>
<dbReference type="GeneTree" id="ENSGT00950000182907"/>
<dbReference type="HOGENOM" id="CLU_063314_1_0_1"/>
<dbReference type="InParanoid" id="Q9V895"/>
<dbReference type="OMA" id="VTNENAY"/>
<dbReference type="OrthoDB" id="2160613at2759"/>
<dbReference type="PhylomeDB" id="Q9V895"/>
<dbReference type="Reactome" id="R-DME-450520">
    <property type="pathway name" value="HuR (ELAVL1) binds and stabilizes mRNA"/>
</dbReference>
<dbReference type="SignaLink" id="Q9V895"/>
<dbReference type="BioGRID-ORCS" id="37043">
    <property type="hits" value="0 hits in 3 CRISPR screens"/>
</dbReference>
<dbReference type="ChiTaRS" id="Mapmodulin">
    <property type="organism name" value="fly"/>
</dbReference>
<dbReference type="GenomeRNAi" id="37043"/>
<dbReference type="PRO" id="PR:Q9V895"/>
<dbReference type="Proteomes" id="UP000000803">
    <property type="component" value="Chromosome 2R"/>
</dbReference>
<dbReference type="Bgee" id="FBgn0034282">
    <property type="expression patterns" value="Expressed in adult enteroendocrine precursor cell in adult midgut (Drosophila) and 281 other cell types or tissues"/>
</dbReference>
<dbReference type="ExpressionAtlas" id="Q9V895">
    <property type="expression patterns" value="baseline and differential"/>
</dbReference>
<dbReference type="GO" id="GO:0005737">
    <property type="term" value="C:cytoplasm"/>
    <property type="evidence" value="ECO:0000250"/>
    <property type="project" value="UniProtKB"/>
</dbReference>
<dbReference type="GO" id="GO:0005783">
    <property type="term" value="C:endoplasmic reticulum"/>
    <property type="evidence" value="ECO:0000250"/>
    <property type="project" value="UniProtKB"/>
</dbReference>
<dbReference type="GO" id="GO:0005654">
    <property type="term" value="C:nucleoplasm"/>
    <property type="evidence" value="ECO:0007005"/>
    <property type="project" value="FlyBase"/>
</dbReference>
<dbReference type="GO" id="GO:0005634">
    <property type="term" value="C:nucleus"/>
    <property type="evidence" value="ECO:0000250"/>
    <property type="project" value="UniProtKB"/>
</dbReference>
<dbReference type="GO" id="GO:0048471">
    <property type="term" value="C:perinuclear region of cytoplasm"/>
    <property type="evidence" value="ECO:0000250"/>
    <property type="project" value="UniProtKB"/>
</dbReference>
<dbReference type="GO" id="GO:0042393">
    <property type="term" value="F:histone binding"/>
    <property type="evidence" value="ECO:0000318"/>
    <property type="project" value="GO_Central"/>
</dbReference>
<dbReference type="GO" id="GO:0006913">
    <property type="term" value="P:nucleocytoplasmic transport"/>
    <property type="evidence" value="ECO:0000250"/>
    <property type="project" value="UniProtKB"/>
</dbReference>
<dbReference type="FunFam" id="3.80.10.10:FF:000003">
    <property type="entry name" value="Acidic leucine-rich nuclear phosphoprotein 32 family member A"/>
    <property type="match status" value="1"/>
</dbReference>
<dbReference type="Gene3D" id="3.80.10.10">
    <property type="entry name" value="Ribonuclease Inhibitor"/>
    <property type="match status" value="1"/>
</dbReference>
<dbReference type="InterPro" id="IPR045081">
    <property type="entry name" value="AN32"/>
</dbReference>
<dbReference type="InterPro" id="IPR001611">
    <property type="entry name" value="Leu-rich_rpt"/>
</dbReference>
<dbReference type="InterPro" id="IPR032675">
    <property type="entry name" value="LRR_dom_sf"/>
</dbReference>
<dbReference type="PANTHER" id="PTHR11375">
    <property type="entry name" value="ACIDIC LEUCINE-RICH NUCLEAR PHOSPHOPROTEIN 32"/>
    <property type="match status" value="1"/>
</dbReference>
<dbReference type="PANTHER" id="PTHR11375:SF0">
    <property type="entry name" value="ACIDIC LEUCINE-RICH NUCLEAR PHOSPHOPROTEIN 32 FAMILY MEMBER A"/>
    <property type="match status" value="1"/>
</dbReference>
<dbReference type="Pfam" id="PF14580">
    <property type="entry name" value="LRR_9"/>
    <property type="match status" value="1"/>
</dbReference>
<dbReference type="SUPFAM" id="SSF52058">
    <property type="entry name" value="L domain-like"/>
    <property type="match status" value="1"/>
</dbReference>
<dbReference type="PROSITE" id="PS51450">
    <property type="entry name" value="LRR"/>
    <property type="match status" value="5"/>
</dbReference>
<protein>
    <recommendedName>
        <fullName>Acidic leucine-rich nuclear phosphoprotein 32 family member A</fullName>
    </recommendedName>
</protein>
<feature type="chain" id="PRO_0000240188" description="Acidic leucine-rich nuclear phosphoprotein 32 family member A">
    <location>
        <begin position="1"/>
        <end position="261"/>
    </location>
</feature>
<feature type="repeat" description="LRR 1">
    <location>
        <begin position="16"/>
        <end position="37"/>
    </location>
</feature>
<feature type="repeat" description="LRR 2">
    <location>
        <begin position="39"/>
        <end position="60"/>
    </location>
</feature>
<feature type="repeat" description="LRR 3">
    <location>
        <begin position="61"/>
        <end position="83"/>
    </location>
</feature>
<feature type="repeat" description="LRR 4">
    <location>
        <begin position="84"/>
        <end position="105"/>
    </location>
</feature>
<feature type="domain" description="LRRCT">
    <location>
        <begin position="118"/>
        <end position="156"/>
    </location>
</feature>
<feature type="region of interest" description="Disordered" evidence="2">
    <location>
        <begin position="145"/>
        <end position="261"/>
    </location>
</feature>
<feature type="compositionally biased region" description="Acidic residues" evidence="2">
    <location>
        <begin position="145"/>
        <end position="185"/>
    </location>
</feature>
<feature type="compositionally biased region" description="Acidic residues" evidence="2">
    <location>
        <begin position="194"/>
        <end position="229"/>
    </location>
</feature>
<feature type="compositionally biased region" description="Basic and acidic residues" evidence="2">
    <location>
        <begin position="238"/>
        <end position="252"/>
    </location>
</feature>
<feature type="splice variant" id="VSP_036063" description="In isoform C." evidence="3">
    <original>V</original>
    <variation>DKCNAFCLNGLEIDLDELEAFEKRVKAKKSLQDKPPPQSEDKEVDELDEYLKELQLRESTDASTDEQSVINATPQPPSNSNLSFVILLYWFLAILNLGSATYF</variation>
    <location>
        <position position="170"/>
    </location>
</feature>
<sequence length="261" mass="29176">MEKRIELERRARKVNQITELNLDNCRSTSIVGLTDEYTALESLSLINVGLTTLKGFPKLPNLKKLELSDNRISSGLNYLTTSPKLQYLNLSGNKIKDLETLKPLEEFKNLVVLDLFNNDATQVDNYREKIFKMLPSLNFLDGFDCNDEEVQSDGDDDDEVNGNDSDEVGVSDEDDDSDDSDEEANGEVSLSEVYNDDLEEDNSDWEGEDEAGEEDEEEDSDIDDADGDANESAASVNAKDKDGEKEADESQVRGKKRKHDG</sequence>
<keyword id="KW-0025">Alternative splicing</keyword>
<keyword id="KW-0963">Cytoplasm</keyword>
<keyword id="KW-0433">Leucine-rich repeat</keyword>
<keyword id="KW-0539">Nucleus</keyword>
<keyword id="KW-0597">Phosphoprotein</keyword>
<keyword id="KW-1185">Reference proteome</keyword>
<keyword id="KW-0677">Repeat</keyword>
<gene>
    <name type="primary">Anp32a</name>
    <name type="synonym">Mapmodulin</name>
    <name type="ORF">CG5784</name>
</gene>
<name>AN32A_DROME</name>
<organism>
    <name type="scientific">Drosophila melanogaster</name>
    <name type="common">Fruit fly</name>
    <dbReference type="NCBI Taxonomy" id="7227"/>
    <lineage>
        <taxon>Eukaryota</taxon>
        <taxon>Metazoa</taxon>
        <taxon>Ecdysozoa</taxon>
        <taxon>Arthropoda</taxon>
        <taxon>Hexapoda</taxon>
        <taxon>Insecta</taxon>
        <taxon>Pterygota</taxon>
        <taxon>Neoptera</taxon>
        <taxon>Endopterygota</taxon>
        <taxon>Diptera</taxon>
        <taxon>Brachycera</taxon>
        <taxon>Muscomorpha</taxon>
        <taxon>Ephydroidea</taxon>
        <taxon>Drosophilidae</taxon>
        <taxon>Drosophila</taxon>
        <taxon>Sophophora</taxon>
    </lineage>
</organism>
<reference key="1">
    <citation type="journal article" date="2000" name="Science">
        <title>The genome sequence of Drosophila melanogaster.</title>
        <authorList>
            <person name="Adams M.D."/>
            <person name="Celniker S.E."/>
            <person name="Holt R.A."/>
            <person name="Evans C.A."/>
            <person name="Gocayne J.D."/>
            <person name="Amanatides P.G."/>
            <person name="Scherer S.E."/>
            <person name="Li P.W."/>
            <person name="Hoskins R.A."/>
            <person name="Galle R.F."/>
            <person name="George R.A."/>
            <person name="Lewis S.E."/>
            <person name="Richards S."/>
            <person name="Ashburner M."/>
            <person name="Henderson S.N."/>
            <person name="Sutton G.G."/>
            <person name="Wortman J.R."/>
            <person name="Yandell M.D."/>
            <person name="Zhang Q."/>
            <person name="Chen L.X."/>
            <person name="Brandon R.C."/>
            <person name="Rogers Y.-H.C."/>
            <person name="Blazej R.G."/>
            <person name="Champe M."/>
            <person name="Pfeiffer B.D."/>
            <person name="Wan K.H."/>
            <person name="Doyle C."/>
            <person name="Baxter E.G."/>
            <person name="Helt G."/>
            <person name="Nelson C.R."/>
            <person name="Miklos G.L.G."/>
            <person name="Abril J.F."/>
            <person name="Agbayani A."/>
            <person name="An H.-J."/>
            <person name="Andrews-Pfannkoch C."/>
            <person name="Baldwin D."/>
            <person name="Ballew R.M."/>
            <person name="Basu A."/>
            <person name="Baxendale J."/>
            <person name="Bayraktaroglu L."/>
            <person name="Beasley E.M."/>
            <person name="Beeson K.Y."/>
            <person name="Benos P.V."/>
            <person name="Berman B.P."/>
            <person name="Bhandari D."/>
            <person name="Bolshakov S."/>
            <person name="Borkova D."/>
            <person name="Botchan M.R."/>
            <person name="Bouck J."/>
            <person name="Brokstein P."/>
            <person name="Brottier P."/>
            <person name="Burtis K.C."/>
            <person name="Busam D.A."/>
            <person name="Butler H."/>
            <person name="Cadieu E."/>
            <person name="Center A."/>
            <person name="Chandra I."/>
            <person name="Cherry J.M."/>
            <person name="Cawley S."/>
            <person name="Dahlke C."/>
            <person name="Davenport L.B."/>
            <person name="Davies P."/>
            <person name="de Pablos B."/>
            <person name="Delcher A."/>
            <person name="Deng Z."/>
            <person name="Mays A.D."/>
            <person name="Dew I."/>
            <person name="Dietz S.M."/>
            <person name="Dodson K."/>
            <person name="Doup L.E."/>
            <person name="Downes M."/>
            <person name="Dugan-Rocha S."/>
            <person name="Dunkov B.C."/>
            <person name="Dunn P."/>
            <person name="Durbin K.J."/>
            <person name="Evangelista C.C."/>
            <person name="Ferraz C."/>
            <person name="Ferriera S."/>
            <person name="Fleischmann W."/>
            <person name="Fosler C."/>
            <person name="Gabrielian A.E."/>
            <person name="Garg N.S."/>
            <person name="Gelbart W.M."/>
            <person name="Glasser K."/>
            <person name="Glodek A."/>
            <person name="Gong F."/>
            <person name="Gorrell J.H."/>
            <person name="Gu Z."/>
            <person name="Guan P."/>
            <person name="Harris M."/>
            <person name="Harris N.L."/>
            <person name="Harvey D.A."/>
            <person name="Heiman T.J."/>
            <person name="Hernandez J.R."/>
            <person name="Houck J."/>
            <person name="Hostin D."/>
            <person name="Houston K.A."/>
            <person name="Howland T.J."/>
            <person name="Wei M.-H."/>
            <person name="Ibegwam C."/>
            <person name="Jalali M."/>
            <person name="Kalush F."/>
            <person name="Karpen G.H."/>
            <person name="Ke Z."/>
            <person name="Kennison J.A."/>
            <person name="Ketchum K.A."/>
            <person name="Kimmel B.E."/>
            <person name="Kodira C.D."/>
            <person name="Kraft C.L."/>
            <person name="Kravitz S."/>
            <person name="Kulp D."/>
            <person name="Lai Z."/>
            <person name="Lasko P."/>
            <person name="Lei Y."/>
            <person name="Levitsky A.A."/>
            <person name="Li J.H."/>
            <person name="Li Z."/>
            <person name="Liang Y."/>
            <person name="Lin X."/>
            <person name="Liu X."/>
            <person name="Mattei B."/>
            <person name="McIntosh T.C."/>
            <person name="McLeod M.P."/>
            <person name="McPherson D."/>
            <person name="Merkulov G."/>
            <person name="Milshina N.V."/>
            <person name="Mobarry C."/>
            <person name="Morris J."/>
            <person name="Moshrefi A."/>
            <person name="Mount S.M."/>
            <person name="Moy M."/>
            <person name="Murphy B."/>
            <person name="Murphy L."/>
            <person name="Muzny D.M."/>
            <person name="Nelson D.L."/>
            <person name="Nelson D.R."/>
            <person name="Nelson K.A."/>
            <person name="Nixon K."/>
            <person name="Nusskern D.R."/>
            <person name="Pacleb J.M."/>
            <person name="Palazzolo M."/>
            <person name="Pittman G.S."/>
            <person name="Pan S."/>
            <person name="Pollard J."/>
            <person name="Puri V."/>
            <person name="Reese M.G."/>
            <person name="Reinert K."/>
            <person name="Remington K."/>
            <person name="Saunders R.D.C."/>
            <person name="Scheeler F."/>
            <person name="Shen H."/>
            <person name="Shue B.C."/>
            <person name="Siden-Kiamos I."/>
            <person name="Simpson M."/>
            <person name="Skupski M.P."/>
            <person name="Smith T.J."/>
            <person name="Spier E."/>
            <person name="Spradling A.C."/>
            <person name="Stapleton M."/>
            <person name="Strong R."/>
            <person name="Sun E."/>
            <person name="Svirskas R."/>
            <person name="Tector C."/>
            <person name="Turner R."/>
            <person name="Venter E."/>
            <person name="Wang A.H."/>
            <person name="Wang X."/>
            <person name="Wang Z.-Y."/>
            <person name="Wassarman D.A."/>
            <person name="Weinstock G.M."/>
            <person name="Weissenbach J."/>
            <person name="Williams S.M."/>
            <person name="Woodage T."/>
            <person name="Worley K.C."/>
            <person name="Wu D."/>
            <person name="Yang S."/>
            <person name="Yao Q.A."/>
            <person name="Ye J."/>
            <person name="Yeh R.-F."/>
            <person name="Zaveri J.S."/>
            <person name="Zhan M."/>
            <person name="Zhang G."/>
            <person name="Zhao Q."/>
            <person name="Zheng L."/>
            <person name="Zheng X.H."/>
            <person name="Zhong F.N."/>
            <person name="Zhong W."/>
            <person name="Zhou X."/>
            <person name="Zhu S.C."/>
            <person name="Zhu X."/>
            <person name="Smith H.O."/>
            <person name="Gibbs R.A."/>
            <person name="Myers E.W."/>
            <person name="Rubin G.M."/>
            <person name="Venter J.C."/>
        </authorList>
    </citation>
    <scope>NUCLEOTIDE SEQUENCE [LARGE SCALE GENOMIC DNA]</scope>
    <source>
        <strain>Berkeley</strain>
    </source>
</reference>
<reference key="2">
    <citation type="journal article" date="2002" name="Genome Biol.">
        <title>Annotation of the Drosophila melanogaster euchromatic genome: a systematic review.</title>
        <authorList>
            <person name="Misra S."/>
            <person name="Crosby M.A."/>
            <person name="Mungall C.J."/>
            <person name="Matthews B.B."/>
            <person name="Campbell K.S."/>
            <person name="Hradecky P."/>
            <person name="Huang Y."/>
            <person name="Kaminker J.S."/>
            <person name="Millburn G.H."/>
            <person name="Prochnik S.E."/>
            <person name="Smith C.D."/>
            <person name="Tupy J.L."/>
            <person name="Whitfield E.J."/>
            <person name="Bayraktaroglu L."/>
            <person name="Berman B.P."/>
            <person name="Bettencourt B.R."/>
            <person name="Celniker S.E."/>
            <person name="de Grey A.D.N.J."/>
            <person name="Drysdale R.A."/>
            <person name="Harris N.L."/>
            <person name="Richter J."/>
            <person name="Russo S."/>
            <person name="Schroeder A.J."/>
            <person name="Shu S.Q."/>
            <person name="Stapleton M."/>
            <person name="Yamada C."/>
            <person name="Ashburner M."/>
            <person name="Gelbart W.M."/>
            <person name="Rubin G.M."/>
            <person name="Lewis S.E."/>
        </authorList>
    </citation>
    <scope>GENOME REANNOTATION</scope>
    <scope>ALTERNATIVE SPLICING</scope>
    <source>
        <strain>Berkeley</strain>
    </source>
</reference>
<reference key="3">
    <citation type="journal article" date="2002" name="Genome Biol.">
        <title>A Drosophila full-length cDNA resource.</title>
        <authorList>
            <person name="Stapleton M."/>
            <person name="Carlson J.W."/>
            <person name="Brokstein P."/>
            <person name="Yu C."/>
            <person name="Champe M."/>
            <person name="George R.A."/>
            <person name="Guarin H."/>
            <person name="Kronmiller B."/>
            <person name="Pacleb J.M."/>
            <person name="Park S."/>
            <person name="Wan K.H."/>
            <person name="Rubin G.M."/>
            <person name="Celniker S.E."/>
        </authorList>
    </citation>
    <scope>NUCLEOTIDE SEQUENCE [LARGE SCALE MRNA] (ISOFORM A)</scope>
    <source>
        <strain>Berkeley</strain>
        <tissue>Embryo</tissue>
    </source>
</reference>
<reference key="4">
    <citation type="submission" date="2007-02" db="EMBL/GenBank/DDBJ databases">
        <authorList>
            <person name="Stapleton M."/>
            <person name="Carlson J.W."/>
            <person name="Chavez C."/>
            <person name="Frise E."/>
            <person name="George R.A."/>
            <person name="Kapadia B."/>
            <person name="Pacleb J.M."/>
            <person name="Park S."/>
            <person name="Wan K.H."/>
            <person name="Yu C."/>
            <person name="Rubin G.M."/>
            <person name="Celniker S.E."/>
        </authorList>
    </citation>
    <scope>NUCLEOTIDE SEQUENCE [LARGE SCALE MRNA] (ISOFORMS A AND C)</scope>
    <source>
        <strain>Berkeley</strain>
        <tissue>Embryo</tissue>
    </source>
</reference>
<reference key="5">
    <citation type="journal article" date="2005" name="Cerebellum">
        <title>The Anp32 family of proteins containing leucine-rich repeats.</title>
        <authorList>
            <person name="Matilla A."/>
            <person name="Radrizzani M."/>
        </authorList>
    </citation>
    <scope>GENE FAMILY</scope>
    <scope>NOMENCLATURE</scope>
</reference>
<proteinExistence type="evidence at transcript level"/>
<evidence type="ECO:0000250" key="1"/>
<evidence type="ECO:0000256" key="2">
    <source>
        <dbReference type="SAM" id="MobiDB-lite"/>
    </source>
</evidence>
<evidence type="ECO:0000303" key="3">
    <source ref="4"/>
</evidence>
<evidence type="ECO:0000305" key="4"/>
<accession>Q9V895</accession>
<accession>A2VEM0</accession>
<accession>Q0E936</accession>